<keyword id="KW-1185">Reference proteome</keyword>
<name>YHZ2_SCHPO</name>
<reference key="1">
    <citation type="journal article" date="2002" name="Nature">
        <title>The genome sequence of Schizosaccharomyces pombe.</title>
        <authorList>
            <person name="Wood V."/>
            <person name="Gwilliam R."/>
            <person name="Rajandream M.A."/>
            <person name="Lyne M.H."/>
            <person name="Lyne R."/>
            <person name="Stewart A."/>
            <person name="Sgouros J.G."/>
            <person name="Peat N."/>
            <person name="Hayles J."/>
            <person name="Baker S.G."/>
            <person name="Basham D."/>
            <person name="Bowman S."/>
            <person name="Brooks K."/>
            <person name="Brown D."/>
            <person name="Brown S."/>
            <person name="Chillingworth T."/>
            <person name="Churcher C.M."/>
            <person name="Collins M."/>
            <person name="Connor R."/>
            <person name="Cronin A."/>
            <person name="Davis P."/>
            <person name="Feltwell T."/>
            <person name="Fraser A."/>
            <person name="Gentles S."/>
            <person name="Goble A."/>
            <person name="Hamlin N."/>
            <person name="Harris D.E."/>
            <person name="Hidalgo J."/>
            <person name="Hodgson G."/>
            <person name="Holroyd S."/>
            <person name="Hornsby T."/>
            <person name="Howarth S."/>
            <person name="Huckle E.J."/>
            <person name="Hunt S."/>
            <person name="Jagels K."/>
            <person name="James K.D."/>
            <person name="Jones L."/>
            <person name="Jones M."/>
            <person name="Leather S."/>
            <person name="McDonald S."/>
            <person name="McLean J."/>
            <person name="Mooney P."/>
            <person name="Moule S."/>
            <person name="Mungall K.L."/>
            <person name="Murphy L.D."/>
            <person name="Niblett D."/>
            <person name="Odell C."/>
            <person name="Oliver K."/>
            <person name="O'Neil S."/>
            <person name="Pearson D."/>
            <person name="Quail M.A."/>
            <person name="Rabbinowitsch E."/>
            <person name="Rutherford K.M."/>
            <person name="Rutter S."/>
            <person name="Saunders D."/>
            <person name="Seeger K."/>
            <person name="Sharp S."/>
            <person name="Skelton J."/>
            <person name="Simmonds M.N."/>
            <person name="Squares R."/>
            <person name="Squares S."/>
            <person name="Stevens K."/>
            <person name="Taylor K."/>
            <person name="Taylor R.G."/>
            <person name="Tivey A."/>
            <person name="Walsh S.V."/>
            <person name="Warren T."/>
            <person name="Whitehead S."/>
            <person name="Woodward J.R."/>
            <person name="Volckaert G."/>
            <person name="Aert R."/>
            <person name="Robben J."/>
            <person name="Grymonprez B."/>
            <person name="Weltjens I."/>
            <person name="Vanstreels E."/>
            <person name="Rieger M."/>
            <person name="Schaefer M."/>
            <person name="Mueller-Auer S."/>
            <person name="Gabel C."/>
            <person name="Fuchs M."/>
            <person name="Duesterhoeft A."/>
            <person name="Fritzc C."/>
            <person name="Holzer E."/>
            <person name="Moestl D."/>
            <person name="Hilbert H."/>
            <person name="Borzym K."/>
            <person name="Langer I."/>
            <person name="Beck A."/>
            <person name="Lehrach H."/>
            <person name="Reinhardt R."/>
            <person name="Pohl T.M."/>
            <person name="Eger P."/>
            <person name="Zimmermann W."/>
            <person name="Wedler H."/>
            <person name="Wambutt R."/>
            <person name="Purnelle B."/>
            <person name="Goffeau A."/>
            <person name="Cadieu E."/>
            <person name="Dreano S."/>
            <person name="Gloux S."/>
            <person name="Lelaure V."/>
            <person name="Mottier S."/>
            <person name="Galibert F."/>
            <person name="Aves S.J."/>
            <person name="Xiang Z."/>
            <person name="Hunt C."/>
            <person name="Moore K."/>
            <person name="Hurst S.M."/>
            <person name="Lucas M."/>
            <person name="Rochet M."/>
            <person name="Gaillardin C."/>
            <person name="Tallada V.A."/>
            <person name="Garzon A."/>
            <person name="Thode G."/>
            <person name="Daga R.R."/>
            <person name="Cruzado L."/>
            <person name="Jimenez J."/>
            <person name="Sanchez M."/>
            <person name="del Rey F."/>
            <person name="Benito J."/>
            <person name="Dominguez A."/>
            <person name="Revuelta J.L."/>
            <person name="Moreno S."/>
            <person name="Armstrong J."/>
            <person name="Forsburg S.L."/>
            <person name="Cerutti L."/>
            <person name="Lowe T."/>
            <person name="McCombie W.R."/>
            <person name="Paulsen I."/>
            <person name="Potashkin J."/>
            <person name="Shpakovski G.V."/>
            <person name="Ussery D."/>
            <person name="Barrell B.G."/>
            <person name="Nurse P."/>
        </authorList>
    </citation>
    <scope>NUCLEOTIDE SEQUENCE [LARGE SCALE GENOMIC DNA]</scope>
    <source>
        <strain>972 / ATCC 24843</strain>
    </source>
</reference>
<feature type="chain" id="PRO_0000304034" description="Uncharacterized protein C21B10.02">
    <location>
        <begin position="1"/>
        <end position="141"/>
    </location>
</feature>
<dbReference type="EMBL" id="CU329671">
    <property type="protein sequence ID" value="CAB57928.2"/>
    <property type="molecule type" value="Genomic_DNA"/>
</dbReference>
<dbReference type="PIR" id="T39925">
    <property type="entry name" value="T39925"/>
</dbReference>
<dbReference type="RefSeq" id="NP_595685.2">
    <property type="nucleotide sequence ID" value="NM_001021580.3"/>
</dbReference>
<dbReference type="iPTMnet" id="Q9USW0"/>
<dbReference type="PaxDb" id="4896-SPBC21B10.02.1"/>
<dbReference type="EnsemblFungi" id="SPBC21B10.02.1">
    <property type="protein sequence ID" value="SPBC21B10.02.1:pep"/>
    <property type="gene ID" value="SPBC21B10.02"/>
</dbReference>
<dbReference type="KEGG" id="spo:2540722"/>
<dbReference type="PomBase" id="SPBC21B10.02"/>
<dbReference type="VEuPathDB" id="FungiDB:SPBC21B10.02"/>
<dbReference type="HOGENOM" id="CLU_092474_2_0_1"/>
<dbReference type="InParanoid" id="Q9USW0"/>
<dbReference type="OMA" id="DEIFHPI"/>
<dbReference type="PRO" id="PR:Q9USW0"/>
<dbReference type="Proteomes" id="UP000002485">
    <property type="component" value="Chromosome II"/>
</dbReference>
<dbReference type="InterPro" id="IPR056539">
    <property type="entry name" value="NuiA-like"/>
</dbReference>
<dbReference type="PANTHER" id="PTHR42093">
    <property type="match status" value="1"/>
</dbReference>
<dbReference type="PANTHER" id="PTHR42093:SF1">
    <property type="match status" value="1"/>
</dbReference>
<dbReference type="Pfam" id="PF23151">
    <property type="entry name" value="NuiA_2"/>
    <property type="match status" value="1"/>
</dbReference>
<sequence length="141" mass="16092">MSDEAYAAFLETANKPVPSYSGDSSQLPSKWLRSSKNMLEDPSFKTLAGKVKDEYFVSESDEKFHPICIDNIPDEFEEIDAKTFDPHQKYKKVIHAIEQSSGSKDIHYFSYEESSTKTVYYVLAHLNDNKWFGVATVGIYT</sequence>
<gene>
    <name type="ORF">SPBC21B10.02</name>
</gene>
<organism>
    <name type="scientific">Schizosaccharomyces pombe (strain 972 / ATCC 24843)</name>
    <name type="common">Fission yeast</name>
    <dbReference type="NCBI Taxonomy" id="284812"/>
    <lineage>
        <taxon>Eukaryota</taxon>
        <taxon>Fungi</taxon>
        <taxon>Dikarya</taxon>
        <taxon>Ascomycota</taxon>
        <taxon>Taphrinomycotina</taxon>
        <taxon>Schizosaccharomycetes</taxon>
        <taxon>Schizosaccharomycetales</taxon>
        <taxon>Schizosaccharomycetaceae</taxon>
        <taxon>Schizosaccharomyces</taxon>
    </lineage>
</organism>
<protein>
    <recommendedName>
        <fullName>Uncharacterized protein C21B10.02</fullName>
    </recommendedName>
</protein>
<accession>Q9USW0</accession>
<proteinExistence type="predicted"/>